<protein>
    <recommendedName>
        <fullName evidence="1">UPF0250 protein YbeD</fullName>
    </recommendedName>
</protein>
<proteinExistence type="inferred from homology"/>
<reference key="1">
    <citation type="journal article" date="2008" name="Genome Res.">
        <title>Comparative genome analysis of Salmonella enteritidis PT4 and Salmonella gallinarum 287/91 provides insights into evolutionary and host adaptation pathways.</title>
        <authorList>
            <person name="Thomson N.R."/>
            <person name="Clayton D.J."/>
            <person name="Windhorst D."/>
            <person name="Vernikos G."/>
            <person name="Davidson S."/>
            <person name="Churcher C."/>
            <person name="Quail M.A."/>
            <person name="Stevens M."/>
            <person name="Jones M.A."/>
            <person name="Watson M."/>
            <person name="Barron A."/>
            <person name="Layton A."/>
            <person name="Pickard D."/>
            <person name="Kingsley R.A."/>
            <person name="Bignell A."/>
            <person name="Clark L."/>
            <person name="Harris B."/>
            <person name="Ormond D."/>
            <person name="Abdellah Z."/>
            <person name="Brooks K."/>
            <person name="Cherevach I."/>
            <person name="Chillingworth T."/>
            <person name="Woodward J."/>
            <person name="Norberczak H."/>
            <person name="Lord A."/>
            <person name="Arrowsmith C."/>
            <person name="Jagels K."/>
            <person name="Moule S."/>
            <person name="Mungall K."/>
            <person name="Saunders M."/>
            <person name="Whitehead S."/>
            <person name="Chabalgoity J.A."/>
            <person name="Maskell D."/>
            <person name="Humphreys T."/>
            <person name="Roberts M."/>
            <person name="Barrow P.A."/>
            <person name="Dougan G."/>
            <person name="Parkhill J."/>
        </authorList>
    </citation>
    <scope>NUCLEOTIDE SEQUENCE [LARGE SCALE GENOMIC DNA]</scope>
    <source>
        <strain>287/91 / NCTC 13346</strain>
    </source>
</reference>
<comment type="similarity">
    <text evidence="1">Belongs to the UPF0250 family.</text>
</comment>
<gene>
    <name evidence="1" type="primary">ybeD</name>
    <name type="ordered locus">SG0640</name>
</gene>
<accession>B5R7Y4</accession>
<organism>
    <name type="scientific">Salmonella gallinarum (strain 287/91 / NCTC 13346)</name>
    <dbReference type="NCBI Taxonomy" id="550538"/>
    <lineage>
        <taxon>Bacteria</taxon>
        <taxon>Pseudomonadati</taxon>
        <taxon>Pseudomonadota</taxon>
        <taxon>Gammaproteobacteria</taxon>
        <taxon>Enterobacterales</taxon>
        <taxon>Enterobacteriaceae</taxon>
        <taxon>Salmonella</taxon>
    </lineage>
</organism>
<sequence length="87" mass="9799">MKTKLNELLEFPTPFTYKVMGQALPELVDQVVEVVQRHAPGDYSPTVKPSSKGNYHSVSITINATHIEQVETLYEELGNIDIVRMVL</sequence>
<evidence type="ECO:0000255" key="1">
    <source>
        <dbReference type="HAMAP-Rule" id="MF_00659"/>
    </source>
</evidence>
<name>YBED_SALG2</name>
<dbReference type="EMBL" id="AM933173">
    <property type="protein sequence ID" value="CAR36536.1"/>
    <property type="molecule type" value="Genomic_DNA"/>
</dbReference>
<dbReference type="RefSeq" id="WP_000850547.1">
    <property type="nucleotide sequence ID" value="NC_011274.1"/>
</dbReference>
<dbReference type="SMR" id="B5R7Y4"/>
<dbReference type="GeneID" id="83645644"/>
<dbReference type="KEGG" id="seg:SG0640"/>
<dbReference type="HOGENOM" id="CLU_161438_2_1_6"/>
<dbReference type="Proteomes" id="UP000008321">
    <property type="component" value="Chromosome"/>
</dbReference>
<dbReference type="GO" id="GO:0005829">
    <property type="term" value="C:cytosol"/>
    <property type="evidence" value="ECO:0007669"/>
    <property type="project" value="TreeGrafter"/>
</dbReference>
<dbReference type="FunFam" id="3.30.70.260:FF:000002">
    <property type="entry name" value="UPF0250 protein YbeD"/>
    <property type="match status" value="1"/>
</dbReference>
<dbReference type="Gene3D" id="3.30.70.260">
    <property type="match status" value="1"/>
</dbReference>
<dbReference type="HAMAP" id="MF_00659">
    <property type="entry name" value="UPF0250"/>
    <property type="match status" value="1"/>
</dbReference>
<dbReference type="InterPro" id="IPR007454">
    <property type="entry name" value="UPF0250_YbeD-like"/>
</dbReference>
<dbReference type="InterPro" id="IPR027471">
    <property type="entry name" value="YbeD-like_sf"/>
</dbReference>
<dbReference type="NCBIfam" id="NF003447">
    <property type="entry name" value="PRK04998.1"/>
    <property type="match status" value="1"/>
</dbReference>
<dbReference type="PANTHER" id="PTHR38036">
    <property type="entry name" value="UPF0250 PROTEIN YBED"/>
    <property type="match status" value="1"/>
</dbReference>
<dbReference type="PANTHER" id="PTHR38036:SF1">
    <property type="entry name" value="UPF0250 PROTEIN YBED"/>
    <property type="match status" value="1"/>
</dbReference>
<dbReference type="Pfam" id="PF04359">
    <property type="entry name" value="DUF493"/>
    <property type="match status" value="1"/>
</dbReference>
<dbReference type="SUPFAM" id="SSF117991">
    <property type="entry name" value="YbeD/HP0495-like"/>
    <property type="match status" value="1"/>
</dbReference>
<feature type="chain" id="PRO_1000131256" description="UPF0250 protein YbeD">
    <location>
        <begin position="1"/>
        <end position="87"/>
    </location>
</feature>